<organism>
    <name type="scientific">Aedes albopictus</name>
    <name type="common">Asian tiger mosquito</name>
    <name type="synonym">Stegomyia albopicta</name>
    <dbReference type="NCBI Taxonomy" id="7160"/>
    <lineage>
        <taxon>Eukaryota</taxon>
        <taxon>Metazoa</taxon>
        <taxon>Ecdysozoa</taxon>
        <taxon>Arthropoda</taxon>
        <taxon>Hexapoda</taxon>
        <taxon>Insecta</taxon>
        <taxon>Pterygota</taxon>
        <taxon>Neoptera</taxon>
        <taxon>Endopterygota</taxon>
        <taxon>Diptera</taxon>
        <taxon>Nematocera</taxon>
        <taxon>Culicoidea</taxon>
        <taxon>Culicidae</taxon>
        <taxon>Culicinae</taxon>
        <taxon>Aedini</taxon>
        <taxon>Aedes</taxon>
        <taxon>Stegomyia</taxon>
    </lineage>
</organism>
<reference key="1">
    <citation type="journal article" date="1994" name="Biochim. Biophys. Acta">
        <title>Mosquito ribosomal protein rpL31 resembles rat rpL34: cDNA and deduced amino acid sequence.</title>
        <authorList>
            <person name="Lan Q."/>
            <person name="Niu L.L."/>
            <person name="Fallon A.M."/>
        </authorList>
    </citation>
    <scope>NUCLEOTIDE SEQUENCE [MRNA]</scope>
</reference>
<reference key="2">
    <citation type="journal article" date="1999" name="Insect Biochem. Mol. Biol.">
        <title>The ribosomal protein L34 gene from the mosquito, Aedes albopictus: exon-intron organization, copy number, and potential regulatory elements.</title>
        <authorList>
            <person name="Niu L.L."/>
            <person name="Fallon A.M."/>
        </authorList>
    </citation>
    <scope>NUCLEOTIDE SEQUENCE</scope>
</reference>
<proteinExistence type="evidence at transcript level"/>
<accession>P45842</accession>
<comment type="similarity">
    <text evidence="3">Belongs to the eukaryotic ribosomal protein eL34 family.</text>
</comment>
<keyword id="KW-0687">Ribonucleoprotein</keyword>
<keyword id="KW-0689">Ribosomal protein</keyword>
<protein>
    <recommendedName>
        <fullName evidence="3">Large ribosomal subunit protein eL34</fullName>
    </recommendedName>
    <alternativeName>
        <fullName>60S ribosomal protein L34</fullName>
    </alternativeName>
    <alternativeName>
        <fullName>L31</fullName>
    </alternativeName>
</protein>
<feature type="initiator methionine" description="Removed" evidence="1">
    <location>
        <position position="1"/>
    </location>
</feature>
<feature type="chain" id="PRO_0000131837" description="Large ribosomal subunit protein eL34">
    <location>
        <begin position="2"/>
        <end position="130"/>
    </location>
</feature>
<feature type="region of interest" description="Disordered" evidence="2">
    <location>
        <begin position="111"/>
        <end position="130"/>
    </location>
</feature>
<dbReference type="EMBL" id="U03871">
    <property type="protein sequence ID" value="AAA60326.1"/>
    <property type="molecule type" value="mRNA"/>
</dbReference>
<dbReference type="EMBL" id="AF144549">
    <property type="protein sequence ID" value="AAD35010.1"/>
    <property type="molecule type" value="Genomic_DNA"/>
</dbReference>
<dbReference type="PIR" id="S47637">
    <property type="entry name" value="S47637"/>
</dbReference>
<dbReference type="SMR" id="P45842"/>
<dbReference type="VEuPathDB" id="VectorBase:AALC636_018315"/>
<dbReference type="VEuPathDB" id="VectorBase:AALF003533"/>
<dbReference type="VEuPathDB" id="VectorBase:AALFPA_042529"/>
<dbReference type="Proteomes" id="UP000069940">
    <property type="component" value="Unassembled WGS sequence"/>
</dbReference>
<dbReference type="GO" id="GO:1990904">
    <property type="term" value="C:ribonucleoprotein complex"/>
    <property type="evidence" value="ECO:0007669"/>
    <property type="project" value="UniProtKB-KW"/>
</dbReference>
<dbReference type="GO" id="GO:0005840">
    <property type="term" value="C:ribosome"/>
    <property type="evidence" value="ECO:0007669"/>
    <property type="project" value="UniProtKB-KW"/>
</dbReference>
<dbReference type="GO" id="GO:0003735">
    <property type="term" value="F:structural constituent of ribosome"/>
    <property type="evidence" value="ECO:0007669"/>
    <property type="project" value="InterPro"/>
</dbReference>
<dbReference type="GO" id="GO:0006412">
    <property type="term" value="P:translation"/>
    <property type="evidence" value="ECO:0007669"/>
    <property type="project" value="InterPro"/>
</dbReference>
<dbReference type="Gene3D" id="6.20.340.10">
    <property type="match status" value="1"/>
</dbReference>
<dbReference type="Gene3D" id="6.20.370.70">
    <property type="match status" value="1"/>
</dbReference>
<dbReference type="HAMAP" id="MF_00349">
    <property type="entry name" value="Ribosomal_eL34"/>
    <property type="match status" value="1"/>
</dbReference>
<dbReference type="InterPro" id="IPR008195">
    <property type="entry name" value="Ribosomal_eL34"/>
</dbReference>
<dbReference type="InterPro" id="IPR038562">
    <property type="entry name" value="Ribosomal_eL34_C_sf"/>
</dbReference>
<dbReference type="InterPro" id="IPR018065">
    <property type="entry name" value="Ribosomal_eL34_CS"/>
</dbReference>
<dbReference type="InterPro" id="IPR047868">
    <property type="entry name" value="Ribosomal_L34e_arc-type"/>
</dbReference>
<dbReference type="PANTHER" id="PTHR46595">
    <property type="entry name" value="60S RIBOSOMAL PROTEIN L34"/>
    <property type="match status" value="1"/>
</dbReference>
<dbReference type="Pfam" id="PF01199">
    <property type="entry name" value="Ribosomal_L34e"/>
    <property type="match status" value="1"/>
</dbReference>
<dbReference type="PRINTS" id="PR01250">
    <property type="entry name" value="RIBOSOMALL34"/>
</dbReference>
<dbReference type="PROSITE" id="PS01145">
    <property type="entry name" value="RIBOSOMAL_L34E"/>
    <property type="match status" value="1"/>
</dbReference>
<sequence>MVQRLTLRRRLSYNTKSNKRRVVRTPGGRLVYLYVKKQRTVPKCGQCKEKLSGIKPSRPSERPRMCRRLKTVTRTFGGVLCHRCLRERIIRAFLIDEQKVVKVLKAQQLGKPVSKPPKIQKTAKAASKSK</sequence>
<name>RL34_AEDAL</name>
<gene>
    <name type="primary">RpL34</name>
    <name type="synonym">RpL31</name>
</gene>
<evidence type="ECO:0000250" key="1"/>
<evidence type="ECO:0000256" key="2">
    <source>
        <dbReference type="SAM" id="MobiDB-lite"/>
    </source>
</evidence>
<evidence type="ECO:0000305" key="3"/>